<proteinExistence type="evidence at protein level"/>
<accession>O42287</accession>
<accession>A0A1L8HCG8</accession>
<keyword id="KW-0025">Alternative splicing</keyword>
<keyword id="KW-0106">Calcium</keyword>
<keyword id="KW-1003">Cell membrane</keyword>
<keyword id="KW-0966">Cell projection</keyword>
<keyword id="KW-0168">Coated pit</keyword>
<keyword id="KW-0175">Coiled coil</keyword>
<keyword id="KW-0963">Cytoplasm</keyword>
<keyword id="KW-0254">Endocytosis</keyword>
<keyword id="KW-0967">Endosome</keyword>
<keyword id="KW-0268">Exocytosis</keyword>
<keyword id="KW-0472">Membrane</keyword>
<keyword id="KW-0479">Metal-binding</keyword>
<keyword id="KW-0539">Nucleus</keyword>
<keyword id="KW-0653">Protein transport</keyword>
<keyword id="KW-1185">Reference proteome</keyword>
<keyword id="KW-0677">Repeat</keyword>
<keyword id="KW-0728">SH3 domain</keyword>
<keyword id="KW-0770">Synapse</keyword>
<keyword id="KW-0771">Synaptosome</keyword>
<keyword id="KW-0813">Transport</keyword>
<evidence type="ECO:0000250" key="1">
    <source>
        <dbReference type="UniProtKB" id="Q15811"/>
    </source>
</evidence>
<evidence type="ECO:0000250" key="2">
    <source>
        <dbReference type="UniProtKB" id="Q9WVE9"/>
    </source>
</evidence>
<evidence type="ECO:0000250" key="3">
    <source>
        <dbReference type="UniProtKB" id="Q9Z0R4"/>
    </source>
</evidence>
<evidence type="ECO:0000255" key="4"/>
<evidence type="ECO:0000255" key="5">
    <source>
        <dbReference type="PROSITE-ProRule" id="PRU00041"/>
    </source>
</evidence>
<evidence type="ECO:0000255" key="6">
    <source>
        <dbReference type="PROSITE-ProRule" id="PRU00062"/>
    </source>
</evidence>
<evidence type="ECO:0000255" key="7">
    <source>
        <dbReference type="PROSITE-ProRule" id="PRU00077"/>
    </source>
</evidence>
<evidence type="ECO:0000255" key="8">
    <source>
        <dbReference type="PROSITE-ProRule" id="PRU00145"/>
    </source>
</evidence>
<evidence type="ECO:0000255" key="9">
    <source>
        <dbReference type="PROSITE-ProRule" id="PRU00192"/>
    </source>
</evidence>
<evidence type="ECO:0000255" key="10">
    <source>
        <dbReference type="PROSITE-ProRule" id="PRU00448"/>
    </source>
</evidence>
<evidence type="ECO:0000256" key="11">
    <source>
        <dbReference type="SAM" id="MobiDB-lite"/>
    </source>
</evidence>
<evidence type="ECO:0000269" key="12">
    <source>
    </source>
</evidence>
<evidence type="ECO:0000305" key="13"/>
<evidence type="ECO:0000312" key="14">
    <source>
        <dbReference type="Proteomes" id="UP000186698"/>
    </source>
</evidence>
<reference key="1">
    <citation type="journal article" date="1998" name="J. Biol. Chem.">
        <title>Intersectin, a novel adaptor protein with two eps15 homology and five src homology 3 domains.</title>
        <authorList>
            <person name="Yamabhai M."/>
            <person name="Hoffman N.G."/>
            <person name="Hardison N.L."/>
            <person name="McPherson P.S."/>
            <person name="Castagnoli L."/>
            <person name="Cesareni G."/>
            <person name="Kay B.K."/>
        </authorList>
    </citation>
    <scope>NUCLEOTIDE SEQUENCE [MRNA] (ISOFORM 2)</scope>
    <scope>INTERACTION WITH EPN1 AND EPN2</scope>
    <source>
        <tissue>Oocyte</tissue>
    </source>
</reference>
<reference evidence="14" key="2">
    <citation type="journal article" date="2016" name="Nature">
        <title>Genome evolution in the allotetraploid frog Xenopus laevis.</title>
        <authorList>
            <person name="Session A.M."/>
            <person name="Uno Y."/>
            <person name="Kwon T."/>
            <person name="Chapman J.A."/>
            <person name="Toyoda A."/>
            <person name="Takahashi S."/>
            <person name="Fukui A."/>
            <person name="Hikosaka A."/>
            <person name="Suzuki A."/>
            <person name="Kondo M."/>
            <person name="van Heeringen S.J."/>
            <person name="Quigley I."/>
            <person name="Heinz S."/>
            <person name="Ogino H."/>
            <person name="Ochi H."/>
            <person name="Hellsten U."/>
            <person name="Lyons J.B."/>
            <person name="Simakov O."/>
            <person name="Putnam N."/>
            <person name="Stites J."/>
            <person name="Kuroki Y."/>
            <person name="Tanaka T."/>
            <person name="Michiue T."/>
            <person name="Watanabe M."/>
            <person name="Bogdanovic O."/>
            <person name="Lister R."/>
            <person name="Georgiou G."/>
            <person name="Paranjpe S.S."/>
            <person name="van Kruijsbergen I."/>
            <person name="Shu S."/>
            <person name="Carlson J."/>
            <person name="Kinoshita T."/>
            <person name="Ohta Y."/>
            <person name="Mawaribuchi S."/>
            <person name="Jenkins J."/>
            <person name="Grimwood J."/>
            <person name="Schmutz J."/>
            <person name="Mitros T."/>
            <person name="Mozaffari S.V."/>
            <person name="Suzuki Y."/>
            <person name="Haramoto Y."/>
            <person name="Yamamoto T.S."/>
            <person name="Takagi C."/>
            <person name="Heald R."/>
            <person name="Miller K."/>
            <person name="Haudenschild C."/>
            <person name="Kitzman J."/>
            <person name="Nakayama T."/>
            <person name="Izutsu Y."/>
            <person name="Robert J."/>
            <person name="Fortriede J."/>
            <person name="Burns K."/>
            <person name="Lotay V."/>
            <person name="Karimi K."/>
            <person name="Yasuoka Y."/>
            <person name="Dichmann D.S."/>
            <person name="Flajnik M.F."/>
            <person name="Houston D.W."/>
            <person name="Shendure J."/>
            <person name="DuPasquier L."/>
            <person name="Vize P.D."/>
            <person name="Zorn A.M."/>
            <person name="Ito M."/>
            <person name="Marcotte E.M."/>
            <person name="Wallingford J.B."/>
            <person name="Ito Y."/>
            <person name="Asashima M."/>
            <person name="Ueno N."/>
            <person name="Matsuda Y."/>
            <person name="Veenstra G.J."/>
            <person name="Fujiyama A."/>
            <person name="Harland R.M."/>
            <person name="Taira M."/>
            <person name="Rokhsar D.S."/>
        </authorList>
    </citation>
    <scope>NUCLEOTIDE SEQUENCE [LARGE SCALE GENOMIC DNA]</scope>
    <source>
        <strain evidence="14">J</strain>
    </source>
</reference>
<protein>
    <recommendedName>
        <fullName>Intersectin-1</fullName>
    </recommendedName>
</protein>
<name>ITSN1_XENLA</name>
<dbReference type="EMBL" id="AF032118">
    <property type="protein sequence ID" value="AAC73068.1"/>
    <property type="molecule type" value="mRNA"/>
</dbReference>
<dbReference type="EMBL" id="CM004468">
    <property type="protein sequence ID" value="OCT93804.1"/>
    <property type="molecule type" value="Genomic_DNA"/>
</dbReference>
<dbReference type="PIR" id="T09194">
    <property type="entry name" value="T09194"/>
</dbReference>
<dbReference type="RefSeq" id="NP_001080955.1">
    <property type="nucleotide sequence ID" value="NM_001087486.1"/>
</dbReference>
<dbReference type="RefSeq" id="XP_018100329.1">
    <molecule id="O42287-1"/>
    <property type="nucleotide sequence ID" value="XM_018244840.1"/>
</dbReference>
<dbReference type="SMR" id="O42287"/>
<dbReference type="BioGRID" id="98902">
    <property type="interactions" value="4"/>
</dbReference>
<dbReference type="STRING" id="8355.O42287"/>
<dbReference type="PaxDb" id="8355-O42287"/>
<dbReference type="GeneID" id="394300"/>
<dbReference type="KEGG" id="xla:394300"/>
<dbReference type="AGR" id="Xenbase:XB-GENE-5904211"/>
<dbReference type="CTD" id="394300"/>
<dbReference type="OMA" id="QWKARND"/>
<dbReference type="OrthoDB" id="2015333at2759"/>
<dbReference type="Proteomes" id="UP000186698">
    <property type="component" value="Chromosome 2L"/>
</dbReference>
<dbReference type="Proteomes" id="UP000694892">
    <property type="component" value="Chromosome 2L"/>
</dbReference>
<dbReference type="Bgee" id="394300">
    <property type="expression patterns" value="Expressed in egg cell and 19 other cell types or tissues"/>
</dbReference>
<dbReference type="GO" id="GO:0005905">
    <property type="term" value="C:clathrin-coated pit"/>
    <property type="evidence" value="ECO:0007669"/>
    <property type="project" value="UniProtKB-SubCell"/>
</dbReference>
<dbReference type="GO" id="GO:0005737">
    <property type="term" value="C:cytoplasm"/>
    <property type="evidence" value="ECO:0000250"/>
    <property type="project" value="UniProtKB"/>
</dbReference>
<dbReference type="GO" id="GO:0030027">
    <property type="term" value="C:lamellipodium"/>
    <property type="evidence" value="ECO:0007669"/>
    <property type="project" value="UniProtKB-SubCell"/>
</dbReference>
<dbReference type="GO" id="GO:0043005">
    <property type="term" value="C:neuron projection"/>
    <property type="evidence" value="ECO:0007669"/>
    <property type="project" value="UniProtKB-KW"/>
</dbReference>
<dbReference type="GO" id="GO:0005635">
    <property type="term" value="C:nuclear envelope"/>
    <property type="evidence" value="ECO:0000250"/>
    <property type="project" value="UniProtKB"/>
</dbReference>
<dbReference type="GO" id="GO:0005886">
    <property type="term" value="C:plasma membrane"/>
    <property type="evidence" value="ECO:0007669"/>
    <property type="project" value="UniProtKB-SubCell"/>
</dbReference>
<dbReference type="GO" id="GO:0055037">
    <property type="term" value="C:recycling endosome"/>
    <property type="evidence" value="ECO:0007669"/>
    <property type="project" value="UniProtKB-SubCell"/>
</dbReference>
<dbReference type="GO" id="GO:0045202">
    <property type="term" value="C:synapse"/>
    <property type="evidence" value="ECO:0007669"/>
    <property type="project" value="UniProtKB-SubCell"/>
</dbReference>
<dbReference type="GO" id="GO:0005509">
    <property type="term" value="F:calcium ion binding"/>
    <property type="evidence" value="ECO:0007669"/>
    <property type="project" value="InterPro"/>
</dbReference>
<dbReference type="GO" id="GO:0005085">
    <property type="term" value="F:guanyl-nucleotide exchange factor activity"/>
    <property type="evidence" value="ECO:0007669"/>
    <property type="project" value="InterPro"/>
</dbReference>
<dbReference type="GO" id="GO:0006897">
    <property type="term" value="P:endocytosis"/>
    <property type="evidence" value="ECO:0007669"/>
    <property type="project" value="UniProtKB-KW"/>
</dbReference>
<dbReference type="GO" id="GO:0006887">
    <property type="term" value="P:exocytosis"/>
    <property type="evidence" value="ECO:0007669"/>
    <property type="project" value="UniProtKB-KW"/>
</dbReference>
<dbReference type="GO" id="GO:0035556">
    <property type="term" value="P:intracellular signal transduction"/>
    <property type="evidence" value="ECO:0007669"/>
    <property type="project" value="InterPro"/>
</dbReference>
<dbReference type="GO" id="GO:0035025">
    <property type="term" value="P:positive regulation of Rho protein signal transduction"/>
    <property type="evidence" value="ECO:0000318"/>
    <property type="project" value="GO_Central"/>
</dbReference>
<dbReference type="GO" id="GO:0015031">
    <property type="term" value="P:protein transport"/>
    <property type="evidence" value="ECO:0007669"/>
    <property type="project" value="UniProtKB-KW"/>
</dbReference>
<dbReference type="CDD" id="cd08375">
    <property type="entry name" value="C2_Intersectin"/>
    <property type="match status" value="1"/>
</dbReference>
<dbReference type="CDD" id="cd00052">
    <property type="entry name" value="EH"/>
    <property type="match status" value="2"/>
</dbReference>
<dbReference type="CDD" id="cd13264">
    <property type="entry name" value="PH_ITSN"/>
    <property type="match status" value="1"/>
</dbReference>
<dbReference type="CDD" id="cd00160">
    <property type="entry name" value="RhoGEF"/>
    <property type="match status" value="1"/>
</dbReference>
<dbReference type="CDD" id="cd11987">
    <property type="entry name" value="SH3_Intersectin1_1"/>
    <property type="match status" value="1"/>
</dbReference>
<dbReference type="CDD" id="cd11989">
    <property type="entry name" value="SH3_Intersectin1_2"/>
    <property type="match status" value="1"/>
</dbReference>
<dbReference type="CDD" id="cd11991">
    <property type="entry name" value="SH3_Intersectin1_3"/>
    <property type="match status" value="1"/>
</dbReference>
<dbReference type="CDD" id="cd11993">
    <property type="entry name" value="SH3_Intersectin1_4"/>
    <property type="match status" value="1"/>
</dbReference>
<dbReference type="CDD" id="cd11995">
    <property type="entry name" value="SH3_Intersectin1_5"/>
    <property type="match status" value="1"/>
</dbReference>
<dbReference type="FunFam" id="1.20.900.10:FF:000011">
    <property type="entry name" value="Intersectin 1"/>
    <property type="match status" value="1"/>
</dbReference>
<dbReference type="FunFam" id="2.30.29.30:FF:000069">
    <property type="entry name" value="Intersectin 1"/>
    <property type="match status" value="1"/>
</dbReference>
<dbReference type="FunFam" id="2.30.30.40:FF:000024">
    <property type="entry name" value="Intersectin 1"/>
    <property type="match status" value="1"/>
</dbReference>
<dbReference type="FunFam" id="2.30.30.40:FF:000041">
    <property type="entry name" value="Intersectin 1"/>
    <property type="match status" value="2"/>
</dbReference>
<dbReference type="FunFam" id="2.60.40.150:FF:000029">
    <property type="entry name" value="Intersectin 1"/>
    <property type="match status" value="1"/>
</dbReference>
<dbReference type="FunFam" id="1.10.238.10:FF:000055">
    <property type="entry name" value="Intersectin-1 isoform 1"/>
    <property type="match status" value="1"/>
</dbReference>
<dbReference type="FunFam" id="1.10.238.10:FF:000046">
    <property type="entry name" value="intersectin-1 isoform X2"/>
    <property type="match status" value="1"/>
</dbReference>
<dbReference type="FunFam" id="2.30.30.40:FF:000122">
    <property type="entry name" value="intersectin-1 isoform X2"/>
    <property type="match status" value="1"/>
</dbReference>
<dbReference type="Gene3D" id="2.60.40.150">
    <property type="entry name" value="C2 domain"/>
    <property type="match status" value="1"/>
</dbReference>
<dbReference type="Gene3D" id="1.20.900.10">
    <property type="entry name" value="Dbl homology (DH) domain"/>
    <property type="match status" value="1"/>
</dbReference>
<dbReference type="Gene3D" id="1.10.238.10">
    <property type="entry name" value="EF-hand"/>
    <property type="match status" value="2"/>
</dbReference>
<dbReference type="Gene3D" id="2.30.29.30">
    <property type="entry name" value="Pleckstrin-homology domain (PH domain)/Phosphotyrosine-binding domain (PTB)"/>
    <property type="match status" value="1"/>
</dbReference>
<dbReference type="Gene3D" id="2.30.30.40">
    <property type="entry name" value="SH3 Domains"/>
    <property type="match status" value="5"/>
</dbReference>
<dbReference type="InterPro" id="IPR000008">
    <property type="entry name" value="C2_dom"/>
</dbReference>
<dbReference type="InterPro" id="IPR035892">
    <property type="entry name" value="C2_domain_sf"/>
</dbReference>
<dbReference type="InterPro" id="IPR035899">
    <property type="entry name" value="DBL_dom_sf"/>
</dbReference>
<dbReference type="InterPro" id="IPR000219">
    <property type="entry name" value="DH_dom"/>
</dbReference>
<dbReference type="InterPro" id="IPR011992">
    <property type="entry name" value="EF-hand-dom_pair"/>
</dbReference>
<dbReference type="InterPro" id="IPR018247">
    <property type="entry name" value="EF_Hand_1_Ca_BS"/>
</dbReference>
<dbReference type="InterPro" id="IPR002048">
    <property type="entry name" value="EF_hand_dom"/>
</dbReference>
<dbReference type="InterPro" id="IPR000261">
    <property type="entry name" value="EH_dom"/>
</dbReference>
<dbReference type="InterPro" id="IPR051480">
    <property type="entry name" value="Endocytic_GEF_Adapter"/>
</dbReference>
<dbReference type="InterPro" id="IPR001331">
    <property type="entry name" value="GDS_CDC24_CS"/>
</dbReference>
<dbReference type="InterPro" id="IPR032140">
    <property type="entry name" value="INTAP"/>
</dbReference>
<dbReference type="InterPro" id="IPR011993">
    <property type="entry name" value="PH-like_dom_sf"/>
</dbReference>
<dbReference type="InterPro" id="IPR001849">
    <property type="entry name" value="PH_domain"/>
</dbReference>
<dbReference type="InterPro" id="IPR036028">
    <property type="entry name" value="SH3-like_dom_sf"/>
</dbReference>
<dbReference type="InterPro" id="IPR001452">
    <property type="entry name" value="SH3_domain"/>
</dbReference>
<dbReference type="PANTHER" id="PTHR46006:SF9">
    <property type="entry name" value="INTERSECTIN-1"/>
    <property type="match status" value="1"/>
</dbReference>
<dbReference type="PANTHER" id="PTHR46006">
    <property type="entry name" value="RHO GUANINE NUCLEOTIDE EXCHANGE FACTOR AT 64C, ISOFORM A"/>
    <property type="match status" value="1"/>
</dbReference>
<dbReference type="Pfam" id="PF00168">
    <property type="entry name" value="C2"/>
    <property type="match status" value="1"/>
</dbReference>
<dbReference type="Pfam" id="PF12763">
    <property type="entry name" value="EH"/>
    <property type="match status" value="2"/>
</dbReference>
<dbReference type="Pfam" id="PF16617">
    <property type="entry name" value="INTAP"/>
    <property type="match status" value="1"/>
</dbReference>
<dbReference type="Pfam" id="PF16652">
    <property type="entry name" value="PH_13"/>
    <property type="match status" value="1"/>
</dbReference>
<dbReference type="Pfam" id="PF00621">
    <property type="entry name" value="RhoGEF"/>
    <property type="match status" value="1"/>
</dbReference>
<dbReference type="Pfam" id="PF00018">
    <property type="entry name" value="SH3_1"/>
    <property type="match status" value="1"/>
</dbReference>
<dbReference type="Pfam" id="PF07653">
    <property type="entry name" value="SH3_2"/>
    <property type="match status" value="2"/>
</dbReference>
<dbReference type="Pfam" id="PF14604">
    <property type="entry name" value="SH3_9"/>
    <property type="match status" value="2"/>
</dbReference>
<dbReference type="PRINTS" id="PR00499">
    <property type="entry name" value="P67PHOX"/>
</dbReference>
<dbReference type="PRINTS" id="PR00452">
    <property type="entry name" value="SH3DOMAIN"/>
</dbReference>
<dbReference type="SMART" id="SM00239">
    <property type="entry name" value="C2"/>
    <property type="match status" value="1"/>
</dbReference>
<dbReference type="SMART" id="SM00054">
    <property type="entry name" value="EFh"/>
    <property type="match status" value="2"/>
</dbReference>
<dbReference type="SMART" id="SM00027">
    <property type="entry name" value="EH"/>
    <property type="match status" value="2"/>
</dbReference>
<dbReference type="SMART" id="SM00233">
    <property type="entry name" value="PH"/>
    <property type="match status" value="1"/>
</dbReference>
<dbReference type="SMART" id="SM00325">
    <property type="entry name" value="RhoGEF"/>
    <property type="match status" value="1"/>
</dbReference>
<dbReference type="SMART" id="SM00326">
    <property type="entry name" value="SH3"/>
    <property type="match status" value="5"/>
</dbReference>
<dbReference type="SUPFAM" id="SSF49562">
    <property type="entry name" value="C2 domain (Calcium/lipid-binding domain, CaLB)"/>
    <property type="match status" value="1"/>
</dbReference>
<dbReference type="SUPFAM" id="SSF48065">
    <property type="entry name" value="DBL homology domain (DH-domain)"/>
    <property type="match status" value="1"/>
</dbReference>
<dbReference type="SUPFAM" id="SSF47473">
    <property type="entry name" value="EF-hand"/>
    <property type="match status" value="2"/>
</dbReference>
<dbReference type="SUPFAM" id="SSF50729">
    <property type="entry name" value="PH domain-like"/>
    <property type="match status" value="1"/>
</dbReference>
<dbReference type="SUPFAM" id="SSF50044">
    <property type="entry name" value="SH3-domain"/>
    <property type="match status" value="5"/>
</dbReference>
<dbReference type="PROSITE" id="PS50004">
    <property type="entry name" value="C2"/>
    <property type="match status" value="1"/>
</dbReference>
<dbReference type="PROSITE" id="PS00741">
    <property type="entry name" value="DH_1"/>
    <property type="match status" value="1"/>
</dbReference>
<dbReference type="PROSITE" id="PS50010">
    <property type="entry name" value="DH_2"/>
    <property type="match status" value="1"/>
</dbReference>
<dbReference type="PROSITE" id="PS00018">
    <property type="entry name" value="EF_HAND_1"/>
    <property type="match status" value="2"/>
</dbReference>
<dbReference type="PROSITE" id="PS50222">
    <property type="entry name" value="EF_HAND_2"/>
    <property type="match status" value="2"/>
</dbReference>
<dbReference type="PROSITE" id="PS50031">
    <property type="entry name" value="EH"/>
    <property type="match status" value="2"/>
</dbReference>
<dbReference type="PROSITE" id="PS50003">
    <property type="entry name" value="PH_DOMAIN"/>
    <property type="match status" value="1"/>
</dbReference>
<dbReference type="PROSITE" id="PS50002">
    <property type="entry name" value="SH3"/>
    <property type="match status" value="5"/>
</dbReference>
<feature type="chain" id="PRO_0000080960" description="Intersectin-1">
    <location>
        <begin position="1"/>
        <end position="1705"/>
    </location>
</feature>
<feature type="domain" description="EH 1" evidence="7">
    <location>
        <begin position="21"/>
        <end position="109"/>
    </location>
</feature>
<feature type="domain" description="EF-hand 1" evidence="10">
    <location>
        <begin position="53"/>
        <end position="88"/>
    </location>
</feature>
<feature type="domain" description="EH 2" evidence="7">
    <location>
        <begin position="220"/>
        <end position="309"/>
    </location>
</feature>
<feature type="domain" description="EF-hand 2" evidence="10">
    <location>
        <begin position="253"/>
        <end position="288"/>
    </location>
</feature>
<feature type="domain" description="SH3 1" evidence="9">
    <location>
        <begin position="732"/>
        <end position="793"/>
    </location>
</feature>
<feature type="domain" description="SH3 2" evidence="9">
    <location>
        <begin position="897"/>
        <end position="955"/>
    </location>
</feature>
<feature type="domain" description="SH3 3" evidence="9">
    <location>
        <begin position="986"/>
        <end position="1044"/>
    </location>
</feature>
<feature type="domain" description="SH3 4" evidence="9">
    <location>
        <begin position="1058"/>
        <end position="1122"/>
    </location>
</feature>
<feature type="domain" description="SH3 5" evidence="9">
    <location>
        <begin position="1139"/>
        <end position="1198"/>
    </location>
</feature>
<feature type="domain" description="DH" evidence="6">
    <location>
        <begin position="1221"/>
        <end position="1407"/>
    </location>
</feature>
<feature type="domain" description="PH" evidence="8">
    <location>
        <begin position="1446"/>
        <end position="1555"/>
    </location>
</feature>
<feature type="domain" description="C2" evidence="5">
    <location>
        <begin position="1563"/>
        <end position="1679"/>
    </location>
</feature>
<feature type="region of interest" description="Disordered" evidence="11">
    <location>
        <begin position="322"/>
        <end position="355"/>
    </location>
</feature>
<feature type="region of interest" description="KLERQ">
    <location>
        <begin position="325"/>
        <end position="697"/>
    </location>
</feature>
<feature type="region of interest" description="Disordered" evidence="11">
    <location>
        <begin position="386"/>
        <end position="433"/>
    </location>
</feature>
<feature type="region of interest" description="Disordered" evidence="11">
    <location>
        <begin position="668"/>
        <end position="708"/>
    </location>
</feature>
<feature type="region of interest" description="Disordered" evidence="11">
    <location>
        <begin position="823"/>
        <end position="851"/>
    </location>
</feature>
<feature type="region of interest" description="Disordered" evidence="11">
    <location>
        <begin position="959"/>
        <end position="978"/>
    </location>
</feature>
<feature type="coiled-coil region" evidence="4">
    <location>
        <begin position="350"/>
        <end position="687"/>
    </location>
</feature>
<feature type="short sequence motif" description="Bipartite nuclear localization signal; in isoform 2" evidence="1">
    <location>
        <begin position="1088"/>
        <end position="1111"/>
    </location>
</feature>
<feature type="compositionally biased region" description="Basic and acidic residues" evidence="11">
    <location>
        <begin position="339"/>
        <end position="355"/>
    </location>
</feature>
<feature type="compositionally biased region" description="Basic and acidic residues" evidence="11">
    <location>
        <begin position="668"/>
        <end position="699"/>
    </location>
</feature>
<feature type="compositionally biased region" description="Low complexity" evidence="11">
    <location>
        <begin position="823"/>
        <end position="833"/>
    </location>
</feature>
<feature type="compositionally biased region" description="Polar residues" evidence="11">
    <location>
        <begin position="834"/>
        <end position="846"/>
    </location>
</feature>
<feature type="compositionally biased region" description="Low complexity" evidence="11">
    <location>
        <begin position="960"/>
        <end position="973"/>
    </location>
</feature>
<feature type="binding site" evidence="10">
    <location>
        <position position="66"/>
    </location>
    <ligand>
        <name>Ca(2+)</name>
        <dbReference type="ChEBI" id="CHEBI:29108"/>
        <label>1</label>
    </ligand>
</feature>
<feature type="binding site" evidence="10">
    <location>
        <position position="68"/>
    </location>
    <ligand>
        <name>Ca(2+)</name>
        <dbReference type="ChEBI" id="CHEBI:29108"/>
        <label>1</label>
    </ligand>
</feature>
<feature type="binding site" evidence="10">
    <location>
        <position position="70"/>
    </location>
    <ligand>
        <name>Ca(2+)</name>
        <dbReference type="ChEBI" id="CHEBI:29108"/>
        <label>1</label>
    </ligand>
</feature>
<feature type="binding site" evidence="10">
    <location>
        <position position="72"/>
    </location>
    <ligand>
        <name>Ca(2+)</name>
        <dbReference type="ChEBI" id="CHEBI:29108"/>
        <label>1</label>
    </ligand>
</feature>
<feature type="binding site" evidence="10">
    <location>
        <position position="77"/>
    </location>
    <ligand>
        <name>Ca(2+)</name>
        <dbReference type="ChEBI" id="CHEBI:29108"/>
        <label>1</label>
    </ligand>
</feature>
<feature type="binding site" evidence="10">
    <location>
        <position position="266"/>
    </location>
    <ligand>
        <name>Ca(2+)</name>
        <dbReference type="ChEBI" id="CHEBI:29108"/>
        <label>2</label>
    </ligand>
</feature>
<feature type="binding site" evidence="10">
    <location>
        <position position="268"/>
    </location>
    <ligand>
        <name>Ca(2+)</name>
        <dbReference type="ChEBI" id="CHEBI:29108"/>
        <label>2</label>
    </ligand>
</feature>
<feature type="binding site" evidence="10">
    <location>
        <position position="270"/>
    </location>
    <ligand>
        <name>Ca(2+)</name>
        <dbReference type="ChEBI" id="CHEBI:29108"/>
        <label>2</label>
    </ligand>
</feature>
<feature type="binding site" evidence="10">
    <location>
        <position position="272"/>
    </location>
    <ligand>
        <name>Ca(2+)</name>
        <dbReference type="ChEBI" id="CHEBI:29108"/>
        <label>2</label>
    </ligand>
</feature>
<feature type="binding site" evidence="10">
    <location>
        <position position="277"/>
    </location>
    <ligand>
        <name>Ca(2+)</name>
        <dbReference type="ChEBI" id="CHEBI:29108"/>
        <label>2</label>
    </ligand>
</feature>
<feature type="binding site" evidence="5">
    <location>
        <position position="1651"/>
    </location>
    <ligand>
        <name>Ca(2+)</name>
        <dbReference type="ChEBI" id="CHEBI:29108"/>
    </ligand>
</feature>
<feature type="binding site" evidence="5">
    <location>
        <position position="1654"/>
    </location>
    <ligand>
        <name>Ca(2+)</name>
        <dbReference type="ChEBI" id="CHEBI:29108"/>
    </ligand>
</feature>
<feature type="binding site" evidence="5">
    <location>
        <position position="1657"/>
    </location>
    <ligand>
        <name>Ca(2+)</name>
        <dbReference type="ChEBI" id="CHEBI:29108"/>
    </ligand>
</feature>
<feature type="splice variant" id="VSP_059962" description="In isoform 2.">
    <original>WCADLHLLDMLSPTERKRQGYIHELIVTEENYVSDLQLVTETFQKPLLESDLLTEKEVAMIFVNWK</original>
    <variation>FRLGVKPAGGIPATGDRPFILFPFRDGPSLLPNAFQAPPLSVVMIKFRCFTAPRFCPDMNVKYINI</variation>
    <location>
        <begin position="1205"/>
        <end position="1270"/>
    </location>
</feature>
<feature type="splice variant" id="VSP_059963" description="In isoform 2.">
    <location>
        <begin position="1271"/>
        <end position="1705"/>
    </location>
</feature>
<feature type="sequence conflict" description="In Ref. 1; AAC73068." evidence="13" ref="1">
    <original>N</original>
    <variation>I</variation>
    <location>
        <position position="547"/>
    </location>
</feature>
<feature type="sequence conflict" description="In Ref. 1; AAC73068." evidence="13" ref="1">
    <original>H</original>
    <variation>Q</variation>
    <location>
        <position position="654"/>
    </location>
</feature>
<feature type="sequence conflict" description="In Ref. 1; AAC73068." evidence="13" ref="1">
    <original>I</original>
    <variation>V</variation>
    <location>
        <position position="683"/>
    </location>
</feature>
<feature type="sequence conflict" description="In Ref. 1; AAC73068." evidence="13" ref="1">
    <original>G</original>
    <variation>A</variation>
    <location>
        <position position="1073"/>
    </location>
</feature>
<comment type="function">
    <text evidence="1 3">Adapter protein that provides a link between the endocytic membrane traffic and the actin assembly machinery. Acts as a guanine nucleotide exchange factor (GEF) for cdc42, and thereby stimulates actin nucleation mediated by wasl and the arp2/3 complex (By similarity). Involved in endocytosis of activated egfr, and probably also other growth factor receptors (By similarity).</text>
</comment>
<comment type="cofactor">
    <cofactor evidence="5">
        <name>Ca(2+)</name>
        <dbReference type="ChEBI" id="CHEBI:29108"/>
    </cofactor>
</comment>
<comment type="subunit">
    <text evidence="12">Binds epn1 and epn2.</text>
</comment>
<comment type="subcellular location">
    <subcellularLocation>
        <location evidence="1">Endomembrane system</location>
    </subcellularLocation>
    <subcellularLocation>
        <location evidence="2">Synapse</location>
        <location evidence="2">Synaptosome</location>
    </subcellularLocation>
    <subcellularLocation>
        <location evidence="1">Cell projection</location>
        <location evidence="1">Lamellipodium</location>
    </subcellularLocation>
    <subcellularLocation>
        <location evidence="1">Cell membrane</location>
    </subcellularLocation>
    <subcellularLocation>
        <location evidence="1">Membrane</location>
        <location evidence="1">Clathrin-coated pit</location>
    </subcellularLocation>
    <subcellularLocation>
        <location evidence="1">Recycling endosome</location>
    </subcellularLocation>
</comment>
<comment type="subcellular location">
    <molecule>Isoform 2</molecule>
    <subcellularLocation>
        <location evidence="1">Cytoplasm</location>
    </subcellularLocation>
    <subcellularLocation>
        <location evidence="1">Nucleus envelope</location>
    </subcellularLocation>
    <text evidence="1">Shuttles between the cytoplasm and nucleus in an XPO1/CRM1-dependent manner.</text>
</comment>
<comment type="alternative products">
    <event type="alternative splicing"/>
    <isoform>
        <id>O42287-1</id>
        <name>1</name>
        <sequence type="displayed"/>
    </isoform>
    <isoform>
        <id>O42287-2</id>
        <name>2</name>
        <name evidence="1">ITSN-s</name>
        <sequence type="described" ref="VSP_059962 VSP_059963"/>
    </isoform>
</comment>
<gene>
    <name type="primary">itsn1</name>
</gene>
<organism>
    <name type="scientific">Xenopus laevis</name>
    <name type="common">African clawed frog</name>
    <dbReference type="NCBI Taxonomy" id="8355"/>
    <lineage>
        <taxon>Eukaryota</taxon>
        <taxon>Metazoa</taxon>
        <taxon>Chordata</taxon>
        <taxon>Craniata</taxon>
        <taxon>Vertebrata</taxon>
        <taxon>Euteleostomi</taxon>
        <taxon>Amphibia</taxon>
        <taxon>Batrachia</taxon>
        <taxon>Anura</taxon>
        <taxon>Pipoidea</taxon>
        <taxon>Pipidae</taxon>
        <taxon>Xenopodinae</taxon>
        <taxon>Xenopus</taxon>
        <taxon>Xenopus</taxon>
    </lineage>
</organism>
<sequence>MAQFGTPFGGNLDIWAITVEERAKHDQQFHGLKPTAGYITGDQARNFFLQSGLPQPVLAQIWALADMNNDGRMDQLEFSIAMKLIKLKLQGYPLPSILPSNMLKQPVAMPAAAVAGFGMSGIVGIPPLAAVAPVPMPSIPVVGMSPPLVSSVPTVPPLSNGAPAVIQSHPAFAHSATLPKSSSFGRSVAGSQINTKLQKAQSFDVPAPPLVVEWAVPSSSRLKYRQLFNSQDKTMSGNLTGPQARTILMQSSLPQSQLATIWNLSDIDQDGKLTAEEFILAMHLIDVAMSGQPLPPILPPEYIPPSFRRVRSGSGLSIMSSVSVDQRLPEEPEEEEPQNADKKLPVTFEDKKRENFERGNLELEKRRQALLEQQRKEQERLAQLERAEQERKERERQDQERKRQQDLEKQLEKQRELERQREEERRKEIERREAAKRELERQRQLEWERNRRQELLNQRNREQEDIVVLKAKKKTLEFELEALNDKKHQLEGKLQDIRCRLTTQRHEIESTNKSRELRIAEITHLQQQLQESQQLLGKMIPEKQSLNDQLKQVQQNSLHRDSLLTLKRALETKEIGRQQLRDQLDEVEKETRAKLQEIDVFNNQLKELRELYNKQQFQKQQDFETEKIKQKELERKTSELDKLKEEDKRRMLEHDKLWQDRVKQEEERYKFQDEEKEKREESIQKCEVEKKPEIQEKPNKPFHQPPEPGKLGGQIPWMNTEKAPLTINQGDVKVVYYRALYPFDARSHDEITIEPGDIIMVDESQTGEPGWLGGELKGKTGWFPANYAERMPESEFPSTTKPAAETTAKPTVHVAPSPVAPAAFTNTSTNSNNWADFSSTWPTNNTDKVESDNWDTWAAQPSLTVPSAGQHRQRSAFTPATVTGSSPSPVLGQGEKVEGLQAQALYPWRAKKDNHLNFNKNDVITVLEQQDMWWFGEVQGQKGWFPKSYVKLISGPLRKSTSIDSTSSESPASLKRVSSPAFKPAIQGEEYISMYTYESNEQGDLTFQQGDLIVVIKKDGDWWTGTVGEKTGVFPSNYVRPKDSEAAGSGGKTGSLGKKPEIAQVIASYAATGPEQLTLAPGQLILIRKKNPGGWWEGELQARGKKRQIGWFPANYVKLLSPGTNKSTPTEPPKPTSLPPTCQVIGMYDYIAQNDDELAFSKGQVINVLNKEDPDWWKGELNGHVGLFPSNYVKLTTDMDPSQQWCADLHLLDMLSPTERKRQGYIHELIVTEENYVSDLQLVTETFQKPLLESDLLTEKEVAMIFVNWKELIMCNIKLLKALRVRKKMSGEKMPVKMIGDILTAQLPHMQPYIRFCSCQLNGAALIQQKTDEVPEFKEFVKRLAMDPRCKGMPLSSFLLKPMQRVTRYPLIIKNIIENTPENHPDHSHLKQALEKAEELCSQVNEGVREKENSDRLEWIQGHVQCEGLSEQLVFNSVTNCLGPRKFLHSGKLYKAKSNKELYGFLFNDFLLLTQIIKPLGSSGNDKVFSPKSNLQYKMYKTPIFLNEVLVKLPTDPSGDEPIFHISHIDRVYTLRAESINERTAWVQKIKAASELYIETEKKKREKAYLVRSQRATGIGRLMVNIVEGIELKPCRTHGKSNPYCEITMGSQCHITKTIQDTLNPKWNSNCQFFIKDLEQDVLCITVFERDQFSPDDFLGRTEIRVADIKKDQGSKGPVTKCLLLHEVPTGEIVVRLDLQLFDEP</sequence>